<feature type="chain" id="PRO_0000405033" description="HTH-type transcriptional repressor KstR2">
    <location>
        <begin position="1"/>
        <end position="204"/>
    </location>
</feature>
<feature type="domain" description="HTH tetR-type" evidence="2">
    <location>
        <begin position="13"/>
        <end position="73"/>
    </location>
</feature>
<feature type="DNA-binding region" description="H-T-H motif" evidence="2">
    <location>
        <begin position="36"/>
        <end position="55"/>
    </location>
</feature>
<feature type="helix" evidence="4">
    <location>
        <begin position="12"/>
        <end position="30"/>
    </location>
</feature>
<feature type="helix" evidence="4">
    <location>
        <begin position="37"/>
        <end position="43"/>
    </location>
</feature>
<feature type="helix" evidence="4">
    <location>
        <begin position="48"/>
        <end position="54"/>
    </location>
</feature>
<feature type="helix" evidence="4">
    <location>
        <begin position="58"/>
        <end position="82"/>
    </location>
</feature>
<feature type="helix" evidence="4">
    <location>
        <begin position="87"/>
        <end position="104"/>
    </location>
</feature>
<feature type="helix" evidence="4">
    <location>
        <begin position="106"/>
        <end position="114"/>
    </location>
</feature>
<feature type="helix" evidence="4">
    <location>
        <begin position="117"/>
        <end position="119"/>
    </location>
</feature>
<feature type="helix" evidence="4">
    <location>
        <begin position="123"/>
        <end position="125"/>
    </location>
</feature>
<feature type="helix" evidence="4">
    <location>
        <begin position="126"/>
        <end position="148"/>
    </location>
</feature>
<feature type="helix" evidence="4">
    <location>
        <begin position="158"/>
        <end position="168"/>
    </location>
</feature>
<feature type="helix" evidence="4">
    <location>
        <begin position="171"/>
        <end position="174"/>
    </location>
</feature>
<feature type="strand" evidence="4">
    <location>
        <begin position="180"/>
        <end position="182"/>
    </location>
</feature>
<feature type="helix" evidence="4">
    <location>
        <begin position="184"/>
        <end position="197"/>
    </location>
</feature>
<reference key="1">
    <citation type="journal article" date="2006" name="Proc. Natl. Acad. Sci. U.S.A.">
        <title>The complete genome of Rhodococcus sp. RHA1 provides insights into a catabolic powerhouse.</title>
        <authorList>
            <person name="McLeod M.P."/>
            <person name="Warren R.L."/>
            <person name="Hsiao W.W.L."/>
            <person name="Araki N."/>
            <person name="Myhre M."/>
            <person name="Fernandes C."/>
            <person name="Miyazawa D."/>
            <person name="Wong W."/>
            <person name="Lillquist A.L."/>
            <person name="Wang D."/>
            <person name="Dosanjh M."/>
            <person name="Hara H."/>
            <person name="Petrescu A."/>
            <person name="Morin R.D."/>
            <person name="Yang G."/>
            <person name="Stott J.M."/>
            <person name="Schein J.E."/>
            <person name="Shin H."/>
            <person name="Smailus D."/>
            <person name="Siddiqui A.S."/>
            <person name="Marra M.A."/>
            <person name="Jones S.J.M."/>
            <person name="Holt R."/>
            <person name="Brinkman F.S.L."/>
            <person name="Miyauchi K."/>
            <person name="Fukuda M."/>
            <person name="Davies J.E."/>
            <person name="Mohn W.W."/>
            <person name="Eltis L.D."/>
        </authorList>
    </citation>
    <scope>NUCLEOTIDE SEQUENCE [LARGE SCALE GENOMIC DNA]</scope>
    <source>
        <strain>RHA1</strain>
    </source>
</reference>
<reference key="2">
    <citation type="submission" date="2009-02" db="PDB data bank">
        <title>Crystal structure of probable transcriptional regulatory protein rha5900.</title>
        <authorList>
            <consortium name="Midwest center for structural genomics (MCSG)"/>
        </authorList>
    </citation>
    <scope>X-RAY CRYSTALLOGRAPHY (1.5 ANGSTROMS)</scope>
    <scope>SUBUNIT</scope>
    <source>
        <strain>RHA1</strain>
    </source>
</reference>
<organism>
    <name type="scientific">Rhodococcus jostii (strain RHA1)</name>
    <dbReference type="NCBI Taxonomy" id="101510"/>
    <lineage>
        <taxon>Bacteria</taxon>
        <taxon>Bacillati</taxon>
        <taxon>Actinomycetota</taxon>
        <taxon>Actinomycetes</taxon>
        <taxon>Mycobacteriales</taxon>
        <taxon>Nocardiaceae</taxon>
        <taxon>Rhodococcus</taxon>
    </lineage>
</organism>
<accession>Q0S7V2</accession>
<name>KSTR2_RHOJR</name>
<keyword id="KW-0002">3D-structure</keyword>
<keyword id="KW-0238">DNA-binding</keyword>
<keyword id="KW-0678">Repressor</keyword>
<keyword id="KW-0804">Transcription</keyword>
<keyword id="KW-0805">Transcription regulation</keyword>
<evidence type="ECO:0000250" key="1"/>
<evidence type="ECO:0000255" key="2">
    <source>
        <dbReference type="PROSITE-ProRule" id="PRU00335"/>
    </source>
</evidence>
<evidence type="ECO:0000269" key="3">
    <source ref="2"/>
</evidence>
<evidence type="ECO:0007829" key="4">
    <source>
        <dbReference type="PDB" id="2IBD"/>
    </source>
</evidence>
<proteinExistence type="evidence at protein level"/>
<comment type="function">
    <text evidence="1">Controls the expression of a small regulon that may play a role in the utilization of cholesterol.</text>
</comment>
<comment type="subunit">
    <text evidence="3">Homodimer.</text>
</comment>
<protein>
    <recommendedName>
        <fullName>HTH-type transcriptional repressor KstR2</fullName>
    </recommendedName>
</protein>
<sequence>MTPPPADDTSGKSGRRTELLDIAATLFAERGLRATTVRDIADAAGILSGSLYHHFDSKESMVDEILRGFLDDLFGKYREIVASGLDSRATLEALVTTSYEAIDASHSAVAIYQDEVKHLVANERFTYLSELNTEFRELWMGVLEAGVKDGSFRSDIDVELAFRFLRDTAWVAVRWYRPGGSVTVDTVAKQYLSIVLDGLASPHN</sequence>
<gene>
    <name type="primary">kstR2</name>
    <name type="ordered locus">RHA1_ro04598</name>
</gene>
<dbReference type="EMBL" id="CP000431">
    <property type="protein sequence ID" value="ABG96384.1"/>
    <property type="molecule type" value="Genomic_DNA"/>
</dbReference>
<dbReference type="RefSeq" id="WP_009477673.1">
    <property type="nucleotide sequence ID" value="NC_008268.1"/>
</dbReference>
<dbReference type="PDB" id="2IBD">
    <property type="method" value="X-ray"/>
    <property type="resolution" value="1.50 A"/>
    <property type="chains" value="A/B=1-204"/>
</dbReference>
<dbReference type="PDBsum" id="2IBD"/>
<dbReference type="SMR" id="Q0S7V2"/>
<dbReference type="KEGG" id="rha:RHA1_ro04598"/>
<dbReference type="eggNOG" id="COG1309">
    <property type="taxonomic scope" value="Bacteria"/>
</dbReference>
<dbReference type="HOGENOM" id="CLU_069356_12_4_11"/>
<dbReference type="OrthoDB" id="9814200at2"/>
<dbReference type="EvolutionaryTrace" id="Q0S7V2"/>
<dbReference type="Proteomes" id="UP000008710">
    <property type="component" value="Chromosome"/>
</dbReference>
<dbReference type="GO" id="GO:0003677">
    <property type="term" value="F:DNA binding"/>
    <property type="evidence" value="ECO:0000250"/>
    <property type="project" value="UniProtKB"/>
</dbReference>
<dbReference type="GO" id="GO:0003700">
    <property type="term" value="F:DNA-binding transcription factor activity"/>
    <property type="evidence" value="ECO:0007669"/>
    <property type="project" value="TreeGrafter"/>
</dbReference>
<dbReference type="GO" id="GO:0000976">
    <property type="term" value="F:transcription cis-regulatory region binding"/>
    <property type="evidence" value="ECO:0007669"/>
    <property type="project" value="TreeGrafter"/>
</dbReference>
<dbReference type="GO" id="GO:0006355">
    <property type="term" value="P:regulation of DNA-templated transcription"/>
    <property type="evidence" value="ECO:0000250"/>
    <property type="project" value="UniProtKB"/>
</dbReference>
<dbReference type="FunFam" id="1.10.10.60:FF:000289">
    <property type="entry name" value="TetR family transcriptional regulator"/>
    <property type="match status" value="1"/>
</dbReference>
<dbReference type="FunFam" id="1.10.357.10:FF:000020">
    <property type="entry name" value="TetR family transcriptional regulator"/>
    <property type="match status" value="1"/>
</dbReference>
<dbReference type="Gene3D" id="1.10.10.60">
    <property type="entry name" value="Homeodomain-like"/>
    <property type="match status" value="1"/>
</dbReference>
<dbReference type="Gene3D" id="1.10.357.10">
    <property type="entry name" value="Tetracycline Repressor, domain 2"/>
    <property type="match status" value="1"/>
</dbReference>
<dbReference type="InterPro" id="IPR009057">
    <property type="entry name" value="Homeodomain-like_sf"/>
</dbReference>
<dbReference type="InterPro" id="IPR050109">
    <property type="entry name" value="HTH-type_TetR-like_transc_reg"/>
</dbReference>
<dbReference type="InterPro" id="IPR001647">
    <property type="entry name" value="HTH_TetR"/>
</dbReference>
<dbReference type="InterPro" id="IPR041490">
    <property type="entry name" value="KstR2_TetR_C"/>
</dbReference>
<dbReference type="InterPro" id="IPR036271">
    <property type="entry name" value="Tet_transcr_reg_TetR-rel_C_sf"/>
</dbReference>
<dbReference type="PANTHER" id="PTHR30055">
    <property type="entry name" value="HTH-TYPE TRANSCRIPTIONAL REGULATOR RUTR"/>
    <property type="match status" value="1"/>
</dbReference>
<dbReference type="PANTHER" id="PTHR30055:SF175">
    <property type="entry name" value="HTH-TYPE TRANSCRIPTIONAL REPRESSOR KSTR2"/>
    <property type="match status" value="1"/>
</dbReference>
<dbReference type="Pfam" id="PF17932">
    <property type="entry name" value="TetR_C_24"/>
    <property type="match status" value="1"/>
</dbReference>
<dbReference type="Pfam" id="PF00440">
    <property type="entry name" value="TetR_N"/>
    <property type="match status" value="1"/>
</dbReference>
<dbReference type="PRINTS" id="PR00455">
    <property type="entry name" value="HTHTETR"/>
</dbReference>
<dbReference type="SUPFAM" id="SSF46689">
    <property type="entry name" value="Homeodomain-like"/>
    <property type="match status" value="1"/>
</dbReference>
<dbReference type="SUPFAM" id="SSF48498">
    <property type="entry name" value="Tetracyclin repressor-like, C-terminal domain"/>
    <property type="match status" value="1"/>
</dbReference>
<dbReference type="PROSITE" id="PS50977">
    <property type="entry name" value="HTH_TETR_2"/>
    <property type="match status" value="1"/>
</dbReference>